<gene>
    <name evidence="1" type="primary">leuD</name>
    <name type="ordered locus">BAMEG_3172</name>
</gene>
<dbReference type="EC" id="4.2.1.33" evidence="1"/>
<dbReference type="EMBL" id="CP001215">
    <property type="protein sequence ID" value="ACP15309.1"/>
    <property type="molecule type" value="Genomic_DNA"/>
</dbReference>
<dbReference type="RefSeq" id="WP_000433175.1">
    <property type="nucleotide sequence ID" value="NC_012581.1"/>
</dbReference>
<dbReference type="SMR" id="C3L9Q4"/>
<dbReference type="GeneID" id="45021402"/>
<dbReference type="KEGG" id="bah:BAMEG_3172"/>
<dbReference type="HOGENOM" id="CLU_081378_0_3_9"/>
<dbReference type="UniPathway" id="UPA00048">
    <property type="reaction ID" value="UER00071"/>
</dbReference>
<dbReference type="GO" id="GO:0009316">
    <property type="term" value="C:3-isopropylmalate dehydratase complex"/>
    <property type="evidence" value="ECO:0007669"/>
    <property type="project" value="InterPro"/>
</dbReference>
<dbReference type="GO" id="GO:0003861">
    <property type="term" value="F:3-isopropylmalate dehydratase activity"/>
    <property type="evidence" value="ECO:0007669"/>
    <property type="project" value="UniProtKB-UniRule"/>
</dbReference>
<dbReference type="GO" id="GO:0009098">
    <property type="term" value="P:L-leucine biosynthetic process"/>
    <property type="evidence" value="ECO:0007669"/>
    <property type="project" value="UniProtKB-UniRule"/>
</dbReference>
<dbReference type="CDD" id="cd01577">
    <property type="entry name" value="IPMI_Swivel"/>
    <property type="match status" value="1"/>
</dbReference>
<dbReference type="FunFam" id="3.20.19.10:FF:000003">
    <property type="entry name" value="3-isopropylmalate dehydratase small subunit"/>
    <property type="match status" value="1"/>
</dbReference>
<dbReference type="Gene3D" id="3.20.19.10">
    <property type="entry name" value="Aconitase, domain 4"/>
    <property type="match status" value="1"/>
</dbReference>
<dbReference type="HAMAP" id="MF_01031">
    <property type="entry name" value="LeuD_type1"/>
    <property type="match status" value="1"/>
</dbReference>
<dbReference type="InterPro" id="IPR004431">
    <property type="entry name" value="3-IsopropMal_deHydase_ssu"/>
</dbReference>
<dbReference type="InterPro" id="IPR015928">
    <property type="entry name" value="Aconitase/3IPM_dehydase_swvl"/>
</dbReference>
<dbReference type="InterPro" id="IPR000573">
    <property type="entry name" value="AconitaseA/IPMdHydase_ssu_swvl"/>
</dbReference>
<dbReference type="InterPro" id="IPR033940">
    <property type="entry name" value="IPMI_Swivel"/>
</dbReference>
<dbReference type="InterPro" id="IPR050075">
    <property type="entry name" value="LeuD"/>
</dbReference>
<dbReference type="NCBIfam" id="TIGR00171">
    <property type="entry name" value="leuD"/>
    <property type="match status" value="1"/>
</dbReference>
<dbReference type="NCBIfam" id="NF002458">
    <property type="entry name" value="PRK01641.1"/>
    <property type="match status" value="1"/>
</dbReference>
<dbReference type="PANTHER" id="PTHR43345:SF5">
    <property type="entry name" value="3-ISOPROPYLMALATE DEHYDRATASE SMALL SUBUNIT"/>
    <property type="match status" value="1"/>
</dbReference>
<dbReference type="PANTHER" id="PTHR43345">
    <property type="entry name" value="3-ISOPROPYLMALATE DEHYDRATASE SMALL SUBUNIT 2-RELATED-RELATED"/>
    <property type="match status" value="1"/>
</dbReference>
<dbReference type="Pfam" id="PF00694">
    <property type="entry name" value="Aconitase_C"/>
    <property type="match status" value="1"/>
</dbReference>
<dbReference type="SUPFAM" id="SSF52016">
    <property type="entry name" value="LeuD/IlvD-like"/>
    <property type="match status" value="1"/>
</dbReference>
<feature type="chain" id="PRO_1000149400" description="3-isopropylmalate dehydratase small subunit">
    <location>
        <begin position="1"/>
        <end position="193"/>
    </location>
</feature>
<protein>
    <recommendedName>
        <fullName evidence="1">3-isopropylmalate dehydratase small subunit</fullName>
        <ecNumber evidence="1">4.2.1.33</ecNumber>
    </recommendedName>
    <alternativeName>
        <fullName evidence="1">Alpha-IPM isomerase</fullName>
        <shortName evidence="1">IPMI</shortName>
    </alternativeName>
    <alternativeName>
        <fullName evidence="1">Isopropylmalate isomerase</fullName>
    </alternativeName>
</protein>
<sequence length="193" mass="22605">MEPFRIHKGTAAVLMNDNIDTDQIIPKQYLKRIERTGFGKFLFDEWRYDNERHENPNFPLNAPDRKGASILITGNNFGCGSSREHAPWALADYGFRVIIAGGFADIFYMNCMKNGMLPIVMDKEMREKLVKTDAREQIEVDLENEVITTSTHRFHFTIEKMWKEKLLNGLDEISITMQYEQEIKEYERRIAAY</sequence>
<evidence type="ECO:0000255" key="1">
    <source>
        <dbReference type="HAMAP-Rule" id="MF_01031"/>
    </source>
</evidence>
<comment type="function">
    <text evidence="1">Catalyzes the isomerization between 2-isopropylmalate and 3-isopropylmalate, via the formation of 2-isopropylmaleate.</text>
</comment>
<comment type="catalytic activity">
    <reaction evidence="1">
        <text>(2R,3S)-3-isopropylmalate = (2S)-2-isopropylmalate</text>
        <dbReference type="Rhea" id="RHEA:32287"/>
        <dbReference type="ChEBI" id="CHEBI:1178"/>
        <dbReference type="ChEBI" id="CHEBI:35121"/>
        <dbReference type="EC" id="4.2.1.33"/>
    </reaction>
</comment>
<comment type="pathway">
    <text evidence="1">Amino-acid biosynthesis; L-leucine biosynthesis; L-leucine from 3-methyl-2-oxobutanoate: step 2/4.</text>
</comment>
<comment type="subunit">
    <text evidence="1">Heterodimer of LeuC and LeuD.</text>
</comment>
<comment type="similarity">
    <text evidence="1">Belongs to the LeuD family. LeuD type 1 subfamily.</text>
</comment>
<name>LEUD_BACAC</name>
<organism>
    <name type="scientific">Bacillus anthracis (strain CDC 684 / NRRL 3495)</name>
    <dbReference type="NCBI Taxonomy" id="568206"/>
    <lineage>
        <taxon>Bacteria</taxon>
        <taxon>Bacillati</taxon>
        <taxon>Bacillota</taxon>
        <taxon>Bacilli</taxon>
        <taxon>Bacillales</taxon>
        <taxon>Bacillaceae</taxon>
        <taxon>Bacillus</taxon>
        <taxon>Bacillus cereus group</taxon>
    </lineage>
</organism>
<accession>C3L9Q4</accession>
<keyword id="KW-0028">Amino-acid biosynthesis</keyword>
<keyword id="KW-0100">Branched-chain amino acid biosynthesis</keyword>
<keyword id="KW-0432">Leucine biosynthesis</keyword>
<keyword id="KW-0456">Lyase</keyword>
<reference key="1">
    <citation type="submission" date="2008-10" db="EMBL/GenBank/DDBJ databases">
        <title>Genome sequence of Bacillus anthracis str. CDC 684.</title>
        <authorList>
            <person name="Dodson R.J."/>
            <person name="Munk A.C."/>
            <person name="Brettin T."/>
            <person name="Bruce D."/>
            <person name="Detter C."/>
            <person name="Tapia R."/>
            <person name="Han C."/>
            <person name="Sutton G."/>
            <person name="Sims D."/>
        </authorList>
    </citation>
    <scope>NUCLEOTIDE SEQUENCE [LARGE SCALE GENOMIC DNA]</scope>
    <source>
        <strain>CDC 684 / NRRL 3495</strain>
    </source>
</reference>
<proteinExistence type="inferred from homology"/>